<accession>P48900</accession>
<feature type="chain" id="PRO_0000117406" description="NADH-ubiquinone oxidoreductase chain 1">
    <location>
        <begin position="1"/>
        <end position="318"/>
    </location>
</feature>
<feature type="transmembrane region" description="Helical" evidence="3">
    <location>
        <begin position="2"/>
        <end position="22"/>
    </location>
</feature>
<feature type="transmembrane region" description="Helical" evidence="3">
    <location>
        <begin position="69"/>
        <end position="89"/>
    </location>
</feature>
<feature type="transmembrane region" description="Helical" evidence="3">
    <location>
        <begin position="100"/>
        <end position="120"/>
    </location>
</feature>
<feature type="transmembrane region" description="Helical" evidence="3">
    <location>
        <begin position="146"/>
        <end position="166"/>
    </location>
</feature>
<feature type="transmembrane region" description="Helical" evidence="3">
    <location>
        <begin position="171"/>
        <end position="191"/>
    </location>
</feature>
<feature type="transmembrane region" description="Helical" evidence="3">
    <location>
        <begin position="223"/>
        <end position="243"/>
    </location>
</feature>
<feature type="transmembrane region" description="Helical" evidence="3">
    <location>
        <begin position="253"/>
        <end position="273"/>
    </location>
</feature>
<feature type="transmembrane region" description="Helical" evidence="3">
    <location>
        <begin position="294"/>
        <end position="314"/>
    </location>
</feature>
<reference key="1">
    <citation type="journal article" date="1996" name="Genomics">
        <title>Complete nucleotide sequences of the domestic cat (Felis catus) mitochondrial genome and a transposed mtDNA tandem repeat (Numt) in the nuclear genome.</title>
        <authorList>
            <person name="Lopez J.V."/>
            <person name="Cevario S."/>
            <person name="O'Brien S.J."/>
        </authorList>
    </citation>
    <scope>NUCLEOTIDE SEQUENCE [LARGE SCALE GENOMIC DNA]</scope>
    <source>
        <strain evidence="5">Abyssinian</strain>
        <tissue>Blood</tissue>
    </source>
</reference>
<reference key="2">
    <citation type="journal article" date="1994" name="J. Mol. Evol.">
        <title>Numt, a recent transfer and tandem amplification of mitochondrial DNA to the nuclear genome of the domestic cat.</title>
        <authorList>
            <person name="Lopez J.V."/>
            <person name="Yuhki N."/>
            <person name="Masuda R."/>
            <person name="Modi W."/>
            <person name="O'Brien S.J."/>
        </authorList>
    </citation>
    <scope>NUCLEOTIDE SEQUENCE [GENOMIC DNA] OF 1-115</scope>
</reference>
<evidence type="ECO:0000250" key="1">
    <source>
        <dbReference type="UniProtKB" id="P03886"/>
    </source>
</evidence>
<evidence type="ECO:0000250" key="2">
    <source>
        <dbReference type="UniProtKB" id="P03887"/>
    </source>
</evidence>
<evidence type="ECO:0000255" key="3"/>
<evidence type="ECO:0000305" key="4"/>
<evidence type="ECO:0000312" key="5">
    <source>
        <dbReference type="Proteomes" id="UP000011712"/>
    </source>
</evidence>
<dbReference type="EC" id="7.1.1.2" evidence="1"/>
<dbReference type="EMBL" id="U20753">
    <property type="protein sequence ID" value="AAC48569.1"/>
    <property type="molecule type" value="Genomic_DNA"/>
</dbReference>
<dbReference type="EMBL" id="S75096">
    <property type="protein sequence ID" value="AAB32045.1"/>
    <property type="molecule type" value="Genomic_DNA"/>
</dbReference>
<dbReference type="PIR" id="T11402">
    <property type="entry name" value="T11402"/>
</dbReference>
<dbReference type="RefSeq" id="NP_008251.1">
    <property type="nucleotide sequence ID" value="NC_001700.1"/>
</dbReference>
<dbReference type="SMR" id="P48900"/>
<dbReference type="FunCoup" id="P48900">
    <property type="interactions" value="12"/>
</dbReference>
<dbReference type="STRING" id="9685.ENSFCAP00000025722"/>
<dbReference type="PaxDb" id="9685-ENSFCAP00000025722"/>
<dbReference type="Ensembl" id="ENSFCAT00000032633.1">
    <property type="protein sequence ID" value="ENSFCAP00000025722.1"/>
    <property type="gene ID" value="ENSFCAG00000032048.1"/>
</dbReference>
<dbReference type="GeneID" id="807939"/>
<dbReference type="KEGG" id="fca:807939"/>
<dbReference type="CTD" id="4535"/>
<dbReference type="eggNOG" id="KOG4770">
    <property type="taxonomic scope" value="Eukaryota"/>
</dbReference>
<dbReference type="GeneTree" id="ENSGT00390000006621"/>
<dbReference type="HOGENOM" id="CLU_015134_0_1_1"/>
<dbReference type="InParanoid" id="P48900"/>
<dbReference type="OMA" id="WSGWASN"/>
<dbReference type="OrthoDB" id="531329at2759"/>
<dbReference type="Proteomes" id="UP000011712">
    <property type="component" value="Mitochondrion"/>
</dbReference>
<dbReference type="Bgee" id="ENSFCAG00000032048">
    <property type="expression patterns" value="Expressed in prefrontal cortex and 9 other cell types or tissues"/>
</dbReference>
<dbReference type="GO" id="GO:0005743">
    <property type="term" value="C:mitochondrial inner membrane"/>
    <property type="evidence" value="ECO:0000250"/>
    <property type="project" value="UniProtKB"/>
</dbReference>
<dbReference type="GO" id="GO:0045271">
    <property type="term" value="C:respiratory chain complex I"/>
    <property type="evidence" value="ECO:0000318"/>
    <property type="project" value="GO_Central"/>
</dbReference>
<dbReference type="GO" id="GO:0008137">
    <property type="term" value="F:NADH dehydrogenase (ubiquinone) activity"/>
    <property type="evidence" value="ECO:0000250"/>
    <property type="project" value="UniProtKB"/>
</dbReference>
<dbReference type="GO" id="GO:0009060">
    <property type="term" value="P:aerobic respiration"/>
    <property type="evidence" value="ECO:0000318"/>
    <property type="project" value="GO_Central"/>
</dbReference>
<dbReference type="GO" id="GO:0006120">
    <property type="term" value="P:mitochondrial electron transport, NADH to ubiquinone"/>
    <property type="evidence" value="ECO:0000250"/>
    <property type="project" value="UniProtKB"/>
</dbReference>
<dbReference type="GO" id="GO:0032981">
    <property type="term" value="P:mitochondrial respiratory chain complex I assembly"/>
    <property type="evidence" value="ECO:0000250"/>
    <property type="project" value="UniProtKB"/>
</dbReference>
<dbReference type="HAMAP" id="MF_01350">
    <property type="entry name" value="NDH1_NuoH"/>
    <property type="match status" value="1"/>
</dbReference>
<dbReference type="InterPro" id="IPR001694">
    <property type="entry name" value="NADH_UbQ_OxRdtase_su1/FPO"/>
</dbReference>
<dbReference type="InterPro" id="IPR018086">
    <property type="entry name" value="NADH_UbQ_OxRdtase_su1_CS"/>
</dbReference>
<dbReference type="PANTHER" id="PTHR11432">
    <property type="entry name" value="NADH DEHYDROGENASE SUBUNIT 1"/>
    <property type="match status" value="1"/>
</dbReference>
<dbReference type="PANTHER" id="PTHR11432:SF3">
    <property type="entry name" value="NADH-UBIQUINONE OXIDOREDUCTASE CHAIN 1"/>
    <property type="match status" value="1"/>
</dbReference>
<dbReference type="Pfam" id="PF00146">
    <property type="entry name" value="NADHdh"/>
    <property type="match status" value="1"/>
</dbReference>
<dbReference type="PROSITE" id="PS00667">
    <property type="entry name" value="COMPLEX1_ND1_1"/>
    <property type="match status" value="1"/>
</dbReference>
<dbReference type="PROSITE" id="PS00668">
    <property type="entry name" value="COMPLEX1_ND1_2"/>
    <property type="match status" value="1"/>
</dbReference>
<protein>
    <recommendedName>
        <fullName>NADH-ubiquinone oxidoreductase chain 1</fullName>
        <ecNumber evidence="1">7.1.1.2</ecNumber>
    </recommendedName>
    <alternativeName>
        <fullName>NADH dehydrogenase subunit 1</fullName>
    </alternativeName>
</protein>
<geneLocation type="mitochondrion"/>
<gene>
    <name type="primary">MT-ND1</name>
    <name type="synonym">MTND1</name>
    <name type="synonym">NADH1</name>
    <name type="synonym">ND1</name>
</gene>
<keyword id="KW-0249">Electron transport</keyword>
<keyword id="KW-0472">Membrane</keyword>
<keyword id="KW-0496">Mitochondrion</keyword>
<keyword id="KW-0999">Mitochondrion inner membrane</keyword>
<keyword id="KW-0520">NAD</keyword>
<keyword id="KW-1185">Reference proteome</keyword>
<keyword id="KW-0679">Respiratory chain</keyword>
<keyword id="KW-1278">Translocase</keyword>
<keyword id="KW-0812">Transmembrane</keyword>
<keyword id="KW-1133">Transmembrane helix</keyword>
<keyword id="KW-0813">Transport</keyword>
<keyword id="KW-0830">Ubiquinone</keyword>
<name>NU1M_FELCA</name>
<proteinExistence type="inferred from homology"/>
<organism>
    <name type="scientific">Felis catus</name>
    <name type="common">Cat</name>
    <name type="synonym">Felis silvestris catus</name>
    <dbReference type="NCBI Taxonomy" id="9685"/>
    <lineage>
        <taxon>Eukaryota</taxon>
        <taxon>Metazoa</taxon>
        <taxon>Chordata</taxon>
        <taxon>Craniata</taxon>
        <taxon>Vertebrata</taxon>
        <taxon>Euteleostomi</taxon>
        <taxon>Mammalia</taxon>
        <taxon>Eutheria</taxon>
        <taxon>Laurasiatheria</taxon>
        <taxon>Carnivora</taxon>
        <taxon>Feliformia</taxon>
        <taxon>Felidae</taxon>
        <taxon>Felinae</taxon>
        <taxon>Felis</taxon>
    </lineage>
</organism>
<sequence>MFMINVLSLIIPILLAVAFLTLVERKVLGYMQLRKGPNVVGPYGLLQPIADAVKLFTKEPLRPLTSSMLMFIMAPILALTLALTMWIPLPMPYPLINMNLGVLFMLAMSSLAVYSILWSGWASNSKYALIGALRAVAQTISYEVTLAIILLSVLLMNGSFTLAMLITTQEYMWLIIPAWPLAMMWFISTLAETNRAPFDLTEGESELVSGFDVEYAAGPFALFFLAEYANIIMMNILTTILFFGAFHSPYMPELYTINFTVKTLLLTTTFLWIRASYPRFRYDQLMHLLWKNFLPLTLALCMWHVSLPIITASIPPQT</sequence>
<comment type="function">
    <text evidence="1">Core subunit of the mitochondrial membrane respiratory chain NADH dehydrogenase (Complex I) which catalyzes electron transfer from NADH through the respiratory chain, using ubiquinone as an electron acceptor. Essential for the catalytic activity and assembly of complex I.</text>
</comment>
<comment type="catalytic activity">
    <reaction evidence="1">
        <text>a ubiquinone + NADH + 5 H(+)(in) = a ubiquinol + NAD(+) + 4 H(+)(out)</text>
        <dbReference type="Rhea" id="RHEA:29091"/>
        <dbReference type="Rhea" id="RHEA-COMP:9565"/>
        <dbReference type="Rhea" id="RHEA-COMP:9566"/>
        <dbReference type="ChEBI" id="CHEBI:15378"/>
        <dbReference type="ChEBI" id="CHEBI:16389"/>
        <dbReference type="ChEBI" id="CHEBI:17976"/>
        <dbReference type="ChEBI" id="CHEBI:57540"/>
        <dbReference type="ChEBI" id="CHEBI:57945"/>
        <dbReference type="EC" id="7.1.1.2"/>
    </reaction>
</comment>
<comment type="subunit">
    <text evidence="2">Core subunit of respiratory chain NADH dehydrogenase (Complex I) which is composed of 45 different subunits.</text>
</comment>
<comment type="subcellular location">
    <subcellularLocation>
        <location evidence="2">Mitochondrion inner membrane</location>
        <topology evidence="3">Multi-pass membrane protein</topology>
    </subcellularLocation>
</comment>
<comment type="similarity">
    <text evidence="4">Belongs to the complex I subunit 1 family.</text>
</comment>